<dbReference type="EC" id="3.6.1.7"/>
<dbReference type="EMBL" id="BX640452">
    <property type="protein sequence ID" value="CAE35345.1"/>
    <property type="molecule type" value="Genomic_DNA"/>
</dbReference>
<dbReference type="RefSeq" id="WP_003816015.1">
    <property type="nucleotide sequence ID" value="NC_002927.3"/>
</dbReference>
<dbReference type="SMR" id="Q7WDK7"/>
<dbReference type="KEGG" id="bbr:BB4981"/>
<dbReference type="eggNOG" id="COG1254">
    <property type="taxonomic scope" value="Bacteria"/>
</dbReference>
<dbReference type="HOGENOM" id="CLU_141932_1_2_4"/>
<dbReference type="Proteomes" id="UP000001027">
    <property type="component" value="Chromosome"/>
</dbReference>
<dbReference type="GO" id="GO:0003998">
    <property type="term" value="F:acylphosphatase activity"/>
    <property type="evidence" value="ECO:0007669"/>
    <property type="project" value="UniProtKB-EC"/>
</dbReference>
<dbReference type="Gene3D" id="3.30.70.100">
    <property type="match status" value="1"/>
</dbReference>
<dbReference type="InterPro" id="IPR020456">
    <property type="entry name" value="Acylphosphatase"/>
</dbReference>
<dbReference type="InterPro" id="IPR001792">
    <property type="entry name" value="Acylphosphatase-like_dom"/>
</dbReference>
<dbReference type="InterPro" id="IPR036046">
    <property type="entry name" value="Acylphosphatase-like_dom_sf"/>
</dbReference>
<dbReference type="InterPro" id="IPR017968">
    <property type="entry name" value="Acylphosphatase_CS"/>
</dbReference>
<dbReference type="NCBIfam" id="NF010998">
    <property type="entry name" value="PRK14424.1"/>
    <property type="match status" value="1"/>
</dbReference>
<dbReference type="PANTHER" id="PTHR47268">
    <property type="entry name" value="ACYLPHOSPHATASE"/>
    <property type="match status" value="1"/>
</dbReference>
<dbReference type="PANTHER" id="PTHR47268:SF4">
    <property type="entry name" value="ACYLPHOSPHATASE"/>
    <property type="match status" value="1"/>
</dbReference>
<dbReference type="Pfam" id="PF00708">
    <property type="entry name" value="Acylphosphatase"/>
    <property type="match status" value="1"/>
</dbReference>
<dbReference type="PRINTS" id="PR00112">
    <property type="entry name" value="ACYLPHPHTASE"/>
</dbReference>
<dbReference type="SUPFAM" id="SSF54975">
    <property type="entry name" value="Acylphosphatase/BLUF domain-like"/>
    <property type="match status" value="1"/>
</dbReference>
<dbReference type="PROSITE" id="PS00151">
    <property type="entry name" value="ACYLPHOSPHATASE_2"/>
    <property type="match status" value="1"/>
</dbReference>
<dbReference type="PROSITE" id="PS51160">
    <property type="entry name" value="ACYLPHOSPHATASE_3"/>
    <property type="match status" value="1"/>
</dbReference>
<evidence type="ECO:0000255" key="1">
    <source>
        <dbReference type="PROSITE-ProRule" id="PRU00520"/>
    </source>
</evidence>
<evidence type="ECO:0000305" key="2"/>
<comment type="catalytic activity">
    <reaction>
        <text>an acyl phosphate + H2O = a carboxylate + phosphate + H(+)</text>
        <dbReference type="Rhea" id="RHEA:14965"/>
        <dbReference type="ChEBI" id="CHEBI:15377"/>
        <dbReference type="ChEBI" id="CHEBI:15378"/>
        <dbReference type="ChEBI" id="CHEBI:29067"/>
        <dbReference type="ChEBI" id="CHEBI:43474"/>
        <dbReference type="ChEBI" id="CHEBI:59918"/>
        <dbReference type="EC" id="3.6.1.7"/>
    </reaction>
</comment>
<comment type="similarity">
    <text evidence="2">Belongs to the acylphosphatase family.</text>
</comment>
<protein>
    <recommendedName>
        <fullName>Acylphosphatase</fullName>
        <ecNumber>3.6.1.7</ecNumber>
    </recommendedName>
    <alternativeName>
        <fullName>Acylphosphate phosphohydrolase</fullName>
    </alternativeName>
</protein>
<proteinExistence type="inferred from homology"/>
<accession>Q7WDK7</accession>
<reference key="1">
    <citation type="journal article" date="2003" name="Nat. Genet.">
        <title>Comparative analysis of the genome sequences of Bordetella pertussis, Bordetella parapertussis and Bordetella bronchiseptica.</title>
        <authorList>
            <person name="Parkhill J."/>
            <person name="Sebaihia M."/>
            <person name="Preston A."/>
            <person name="Murphy L.D."/>
            <person name="Thomson N.R."/>
            <person name="Harris D.E."/>
            <person name="Holden M.T.G."/>
            <person name="Churcher C.M."/>
            <person name="Bentley S.D."/>
            <person name="Mungall K.L."/>
            <person name="Cerdeno-Tarraga A.-M."/>
            <person name="Temple L."/>
            <person name="James K.D."/>
            <person name="Harris B."/>
            <person name="Quail M.A."/>
            <person name="Achtman M."/>
            <person name="Atkin R."/>
            <person name="Baker S."/>
            <person name="Basham D."/>
            <person name="Bason N."/>
            <person name="Cherevach I."/>
            <person name="Chillingworth T."/>
            <person name="Collins M."/>
            <person name="Cronin A."/>
            <person name="Davis P."/>
            <person name="Doggett J."/>
            <person name="Feltwell T."/>
            <person name="Goble A."/>
            <person name="Hamlin N."/>
            <person name="Hauser H."/>
            <person name="Holroyd S."/>
            <person name="Jagels K."/>
            <person name="Leather S."/>
            <person name="Moule S."/>
            <person name="Norberczak H."/>
            <person name="O'Neil S."/>
            <person name="Ormond D."/>
            <person name="Price C."/>
            <person name="Rabbinowitsch E."/>
            <person name="Rutter S."/>
            <person name="Sanders M."/>
            <person name="Saunders D."/>
            <person name="Seeger K."/>
            <person name="Sharp S."/>
            <person name="Simmonds M."/>
            <person name="Skelton J."/>
            <person name="Squares R."/>
            <person name="Squares S."/>
            <person name="Stevens K."/>
            <person name="Unwin L."/>
            <person name="Whitehead S."/>
            <person name="Barrell B.G."/>
            <person name="Maskell D.J."/>
        </authorList>
    </citation>
    <scope>NUCLEOTIDE SEQUENCE [LARGE SCALE GENOMIC DNA]</scope>
    <source>
        <strain>ATCC BAA-588 / NCTC 13252 / RB50</strain>
    </source>
</reference>
<sequence length="94" mass="10573">MSDAHMETVHVIVKGKVQGVGYRHAAVRRAHMLGVTGWVQNLPDGTVEAVVQGTADQVDHMLEWLRRGPPAAQVRELASERSFEEKRYKHFAQL</sequence>
<name>ACYP_BORBR</name>
<gene>
    <name type="primary">acyP</name>
    <name type="ordered locus">BB4981</name>
</gene>
<keyword id="KW-0378">Hydrolase</keyword>
<organism>
    <name type="scientific">Bordetella bronchiseptica (strain ATCC BAA-588 / NCTC 13252 / RB50)</name>
    <name type="common">Alcaligenes bronchisepticus</name>
    <dbReference type="NCBI Taxonomy" id="257310"/>
    <lineage>
        <taxon>Bacteria</taxon>
        <taxon>Pseudomonadati</taxon>
        <taxon>Pseudomonadota</taxon>
        <taxon>Betaproteobacteria</taxon>
        <taxon>Burkholderiales</taxon>
        <taxon>Alcaligenaceae</taxon>
        <taxon>Bordetella</taxon>
    </lineage>
</organism>
<feature type="chain" id="PRO_0000326661" description="Acylphosphatase">
    <location>
        <begin position="1"/>
        <end position="94"/>
    </location>
</feature>
<feature type="domain" description="Acylphosphatase-like" evidence="1">
    <location>
        <begin position="8"/>
        <end position="94"/>
    </location>
</feature>
<feature type="active site" evidence="1">
    <location>
        <position position="23"/>
    </location>
</feature>
<feature type="active site" evidence="1">
    <location>
        <position position="41"/>
    </location>
</feature>